<name>UBIG_ROSDO</name>
<organism>
    <name type="scientific">Roseobacter denitrificans (strain ATCC 33942 / OCh 114)</name>
    <name type="common">Erythrobacter sp. (strain OCh 114)</name>
    <name type="synonym">Roseobacter denitrificans</name>
    <dbReference type="NCBI Taxonomy" id="375451"/>
    <lineage>
        <taxon>Bacteria</taxon>
        <taxon>Pseudomonadati</taxon>
        <taxon>Pseudomonadota</taxon>
        <taxon>Alphaproteobacteria</taxon>
        <taxon>Rhodobacterales</taxon>
        <taxon>Roseobacteraceae</taxon>
        <taxon>Roseobacter</taxon>
    </lineage>
</organism>
<dbReference type="EC" id="2.1.1.222" evidence="1"/>
<dbReference type="EC" id="2.1.1.64" evidence="1"/>
<dbReference type="EMBL" id="CP000362">
    <property type="protein sequence ID" value="ABG30111.1"/>
    <property type="molecule type" value="Genomic_DNA"/>
</dbReference>
<dbReference type="RefSeq" id="WP_011566733.1">
    <property type="nucleotide sequence ID" value="NC_008209.1"/>
</dbReference>
<dbReference type="SMR" id="Q16D32"/>
<dbReference type="STRING" id="375451.RD1_0392"/>
<dbReference type="KEGG" id="rde:RD1_0392"/>
<dbReference type="eggNOG" id="COG2227">
    <property type="taxonomic scope" value="Bacteria"/>
</dbReference>
<dbReference type="HOGENOM" id="CLU_042432_2_1_5"/>
<dbReference type="OrthoDB" id="9801538at2"/>
<dbReference type="UniPathway" id="UPA00232"/>
<dbReference type="Proteomes" id="UP000007029">
    <property type="component" value="Chromosome"/>
</dbReference>
<dbReference type="GO" id="GO:0102208">
    <property type="term" value="F:2-polyprenyl-6-hydroxyphenol methylase activity"/>
    <property type="evidence" value="ECO:0007669"/>
    <property type="project" value="UniProtKB-EC"/>
</dbReference>
<dbReference type="GO" id="GO:0061542">
    <property type="term" value="F:3-demethylubiquinol 3-O-methyltransferase activity"/>
    <property type="evidence" value="ECO:0007669"/>
    <property type="project" value="UniProtKB-UniRule"/>
</dbReference>
<dbReference type="GO" id="GO:0010420">
    <property type="term" value="F:polyprenyldihydroxybenzoate methyltransferase activity"/>
    <property type="evidence" value="ECO:0007669"/>
    <property type="project" value="InterPro"/>
</dbReference>
<dbReference type="GO" id="GO:0032259">
    <property type="term" value="P:methylation"/>
    <property type="evidence" value="ECO:0007669"/>
    <property type="project" value="UniProtKB-KW"/>
</dbReference>
<dbReference type="CDD" id="cd02440">
    <property type="entry name" value="AdoMet_MTases"/>
    <property type="match status" value="1"/>
</dbReference>
<dbReference type="Gene3D" id="3.40.50.150">
    <property type="entry name" value="Vaccinia Virus protein VP39"/>
    <property type="match status" value="1"/>
</dbReference>
<dbReference type="HAMAP" id="MF_00472">
    <property type="entry name" value="UbiG"/>
    <property type="match status" value="1"/>
</dbReference>
<dbReference type="InterPro" id="IPR029063">
    <property type="entry name" value="SAM-dependent_MTases_sf"/>
</dbReference>
<dbReference type="InterPro" id="IPR010233">
    <property type="entry name" value="UbiG_MeTrfase"/>
</dbReference>
<dbReference type="NCBIfam" id="TIGR01983">
    <property type="entry name" value="UbiG"/>
    <property type="match status" value="1"/>
</dbReference>
<dbReference type="PANTHER" id="PTHR43464">
    <property type="entry name" value="METHYLTRANSFERASE"/>
    <property type="match status" value="1"/>
</dbReference>
<dbReference type="PANTHER" id="PTHR43464:SF19">
    <property type="entry name" value="UBIQUINONE BIOSYNTHESIS O-METHYLTRANSFERASE, MITOCHONDRIAL"/>
    <property type="match status" value="1"/>
</dbReference>
<dbReference type="Pfam" id="PF13489">
    <property type="entry name" value="Methyltransf_23"/>
    <property type="match status" value="1"/>
</dbReference>
<dbReference type="SUPFAM" id="SSF53335">
    <property type="entry name" value="S-adenosyl-L-methionine-dependent methyltransferases"/>
    <property type="match status" value="1"/>
</dbReference>
<protein>
    <recommendedName>
        <fullName evidence="1">Ubiquinone biosynthesis O-methyltransferase</fullName>
    </recommendedName>
    <alternativeName>
        <fullName evidence="1">2-polyprenyl-6-hydroxyphenol methylase</fullName>
        <ecNumber evidence="1">2.1.1.222</ecNumber>
    </alternativeName>
    <alternativeName>
        <fullName evidence="1">3-demethylubiquinone 3-O-methyltransferase</fullName>
        <ecNumber evidence="1">2.1.1.64</ecNumber>
    </alternativeName>
</protein>
<proteinExistence type="inferred from homology"/>
<accession>Q16D32</accession>
<sequence length="248" mass="27451">MQAPQTTVDPSEIAKFEAMAAEWWDENGKFKPLHMLNPCRLDYITTQIAGEFDRDLASPEPFKGLRILDIGCGGGLLAEPMARLGADVVGADAAERNIPVARVHAEQSGLTIDYRHTTAEALAAEGEQFDVVLNMEVVEHVASPIDYLIACRQLLKPGGLQVCSTLNRNPKSYVMAIIGAEHVMRWLPKGTHEWSKFITPDELYDLLRQSGMDPVDRKGFVFNPISWSWKLSGRDLSVNYVTASVKPA</sequence>
<reference key="1">
    <citation type="journal article" date="2007" name="J. Bacteriol.">
        <title>The complete genome sequence of Roseobacter denitrificans reveals a mixotrophic rather than photosynthetic metabolism.</title>
        <authorList>
            <person name="Swingley W.D."/>
            <person name="Sadekar S."/>
            <person name="Mastrian S.D."/>
            <person name="Matthies H.J."/>
            <person name="Hao J."/>
            <person name="Ramos H."/>
            <person name="Acharya C.R."/>
            <person name="Conrad A.L."/>
            <person name="Taylor H.L."/>
            <person name="Dejesa L.C."/>
            <person name="Shah M.K."/>
            <person name="O'Huallachain M.E."/>
            <person name="Lince M.T."/>
            <person name="Blankenship R.E."/>
            <person name="Beatty J.T."/>
            <person name="Touchman J.W."/>
        </authorList>
    </citation>
    <scope>NUCLEOTIDE SEQUENCE [LARGE SCALE GENOMIC DNA]</scope>
    <source>
        <strain>ATCC 33942 / OCh 114</strain>
    </source>
</reference>
<feature type="chain" id="PRO_1000013919" description="Ubiquinone biosynthesis O-methyltransferase">
    <location>
        <begin position="1"/>
        <end position="248"/>
    </location>
</feature>
<feature type="binding site" evidence="1">
    <location>
        <position position="40"/>
    </location>
    <ligand>
        <name>S-adenosyl-L-methionine</name>
        <dbReference type="ChEBI" id="CHEBI:59789"/>
    </ligand>
</feature>
<feature type="binding site" evidence="1">
    <location>
        <position position="71"/>
    </location>
    <ligand>
        <name>S-adenosyl-L-methionine</name>
        <dbReference type="ChEBI" id="CHEBI:59789"/>
    </ligand>
</feature>
<feature type="binding site" evidence="1">
    <location>
        <position position="92"/>
    </location>
    <ligand>
        <name>S-adenosyl-L-methionine</name>
        <dbReference type="ChEBI" id="CHEBI:59789"/>
    </ligand>
</feature>
<feature type="binding site" evidence="1">
    <location>
        <position position="135"/>
    </location>
    <ligand>
        <name>S-adenosyl-L-methionine</name>
        <dbReference type="ChEBI" id="CHEBI:59789"/>
    </ligand>
</feature>
<comment type="function">
    <text evidence="1">O-methyltransferase that catalyzes the 2 O-methylation steps in the ubiquinone biosynthetic pathway.</text>
</comment>
<comment type="catalytic activity">
    <reaction evidence="1">
        <text>a 3-demethylubiquinol + S-adenosyl-L-methionine = a ubiquinol + S-adenosyl-L-homocysteine + H(+)</text>
        <dbReference type="Rhea" id="RHEA:44380"/>
        <dbReference type="Rhea" id="RHEA-COMP:9566"/>
        <dbReference type="Rhea" id="RHEA-COMP:10914"/>
        <dbReference type="ChEBI" id="CHEBI:15378"/>
        <dbReference type="ChEBI" id="CHEBI:17976"/>
        <dbReference type="ChEBI" id="CHEBI:57856"/>
        <dbReference type="ChEBI" id="CHEBI:59789"/>
        <dbReference type="ChEBI" id="CHEBI:84422"/>
        <dbReference type="EC" id="2.1.1.64"/>
    </reaction>
</comment>
<comment type="catalytic activity">
    <reaction evidence="1">
        <text>a 3-(all-trans-polyprenyl)benzene-1,2-diol + S-adenosyl-L-methionine = a 2-methoxy-6-(all-trans-polyprenyl)phenol + S-adenosyl-L-homocysteine + H(+)</text>
        <dbReference type="Rhea" id="RHEA:31411"/>
        <dbReference type="Rhea" id="RHEA-COMP:9550"/>
        <dbReference type="Rhea" id="RHEA-COMP:9551"/>
        <dbReference type="ChEBI" id="CHEBI:15378"/>
        <dbReference type="ChEBI" id="CHEBI:57856"/>
        <dbReference type="ChEBI" id="CHEBI:59789"/>
        <dbReference type="ChEBI" id="CHEBI:62729"/>
        <dbReference type="ChEBI" id="CHEBI:62731"/>
        <dbReference type="EC" id="2.1.1.222"/>
    </reaction>
</comment>
<comment type="pathway">
    <text evidence="1">Cofactor biosynthesis; ubiquinone biosynthesis.</text>
</comment>
<comment type="similarity">
    <text evidence="1">Belongs to the methyltransferase superfamily. UbiG/COQ3 family.</text>
</comment>
<gene>
    <name evidence="1" type="primary">ubiG</name>
    <name type="ordered locus">RD1_0392</name>
</gene>
<keyword id="KW-0489">Methyltransferase</keyword>
<keyword id="KW-1185">Reference proteome</keyword>
<keyword id="KW-0949">S-adenosyl-L-methionine</keyword>
<keyword id="KW-0808">Transferase</keyword>
<keyword id="KW-0831">Ubiquinone biosynthesis</keyword>
<evidence type="ECO:0000255" key="1">
    <source>
        <dbReference type="HAMAP-Rule" id="MF_00472"/>
    </source>
</evidence>